<feature type="chain" id="PRO_1000119926" description="Exodeoxyribonuclease 7 small subunit">
    <location>
        <begin position="1"/>
        <end position="80"/>
    </location>
</feature>
<sequence>MPKKNEAPASFEKALSELEQIVTRLESGDLPLEEALNEFERGVQLARQGQAKLQQAEQRVQILLSDNEDASLTPFTPDNE</sequence>
<dbReference type="EC" id="3.1.11.6" evidence="1"/>
<dbReference type="EMBL" id="CP000970">
    <property type="protein sequence ID" value="ACB17809.1"/>
    <property type="molecule type" value="Genomic_DNA"/>
</dbReference>
<dbReference type="RefSeq" id="WP_001124935.1">
    <property type="nucleotide sequence ID" value="NC_010498.1"/>
</dbReference>
<dbReference type="SMR" id="B1LJH2"/>
<dbReference type="GeneID" id="75202844"/>
<dbReference type="KEGG" id="ecm:EcSMS35_0458"/>
<dbReference type="HOGENOM" id="CLU_145918_3_3_6"/>
<dbReference type="Proteomes" id="UP000007011">
    <property type="component" value="Chromosome"/>
</dbReference>
<dbReference type="GO" id="GO:0005829">
    <property type="term" value="C:cytosol"/>
    <property type="evidence" value="ECO:0007669"/>
    <property type="project" value="TreeGrafter"/>
</dbReference>
<dbReference type="GO" id="GO:0009318">
    <property type="term" value="C:exodeoxyribonuclease VII complex"/>
    <property type="evidence" value="ECO:0007669"/>
    <property type="project" value="InterPro"/>
</dbReference>
<dbReference type="GO" id="GO:0008855">
    <property type="term" value="F:exodeoxyribonuclease VII activity"/>
    <property type="evidence" value="ECO:0007669"/>
    <property type="project" value="UniProtKB-UniRule"/>
</dbReference>
<dbReference type="GO" id="GO:0006308">
    <property type="term" value="P:DNA catabolic process"/>
    <property type="evidence" value="ECO:0007669"/>
    <property type="project" value="UniProtKB-UniRule"/>
</dbReference>
<dbReference type="FunFam" id="1.10.287.1040:FF:000001">
    <property type="entry name" value="Exodeoxyribonuclease 7 small subunit"/>
    <property type="match status" value="1"/>
</dbReference>
<dbReference type="Gene3D" id="1.10.287.1040">
    <property type="entry name" value="Exonuclease VII, small subunit"/>
    <property type="match status" value="1"/>
</dbReference>
<dbReference type="HAMAP" id="MF_00337">
    <property type="entry name" value="Exonuc_7_S"/>
    <property type="match status" value="1"/>
</dbReference>
<dbReference type="InterPro" id="IPR003761">
    <property type="entry name" value="Exonuc_VII_S"/>
</dbReference>
<dbReference type="InterPro" id="IPR037004">
    <property type="entry name" value="Exonuc_VII_ssu_sf"/>
</dbReference>
<dbReference type="NCBIfam" id="NF002137">
    <property type="entry name" value="PRK00977.1-1"/>
    <property type="match status" value="1"/>
</dbReference>
<dbReference type="NCBIfam" id="NF002140">
    <property type="entry name" value="PRK00977.1-4"/>
    <property type="match status" value="1"/>
</dbReference>
<dbReference type="NCBIfam" id="TIGR01280">
    <property type="entry name" value="xseB"/>
    <property type="match status" value="1"/>
</dbReference>
<dbReference type="PANTHER" id="PTHR34137">
    <property type="entry name" value="EXODEOXYRIBONUCLEASE 7 SMALL SUBUNIT"/>
    <property type="match status" value="1"/>
</dbReference>
<dbReference type="PANTHER" id="PTHR34137:SF1">
    <property type="entry name" value="EXODEOXYRIBONUCLEASE 7 SMALL SUBUNIT"/>
    <property type="match status" value="1"/>
</dbReference>
<dbReference type="Pfam" id="PF02609">
    <property type="entry name" value="Exonuc_VII_S"/>
    <property type="match status" value="1"/>
</dbReference>
<dbReference type="PIRSF" id="PIRSF006488">
    <property type="entry name" value="Exonuc_VII_S"/>
    <property type="match status" value="1"/>
</dbReference>
<dbReference type="SUPFAM" id="SSF116842">
    <property type="entry name" value="XseB-like"/>
    <property type="match status" value="1"/>
</dbReference>
<protein>
    <recommendedName>
        <fullName evidence="1">Exodeoxyribonuclease 7 small subunit</fullName>
        <ecNumber evidence="1">3.1.11.6</ecNumber>
    </recommendedName>
    <alternativeName>
        <fullName evidence="1">Exodeoxyribonuclease VII small subunit</fullName>
        <shortName evidence="1">Exonuclease VII small subunit</shortName>
    </alternativeName>
</protein>
<keyword id="KW-0963">Cytoplasm</keyword>
<keyword id="KW-0269">Exonuclease</keyword>
<keyword id="KW-0378">Hydrolase</keyword>
<keyword id="KW-0540">Nuclease</keyword>
<organism>
    <name type="scientific">Escherichia coli (strain SMS-3-5 / SECEC)</name>
    <dbReference type="NCBI Taxonomy" id="439855"/>
    <lineage>
        <taxon>Bacteria</taxon>
        <taxon>Pseudomonadati</taxon>
        <taxon>Pseudomonadota</taxon>
        <taxon>Gammaproteobacteria</taxon>
        <taxon>Enterobacterales</taxon>
        <taxon>Enterobacteriaceae</taxon>
        <taxon>Escherichia</taxon>
    </lineage>
</organism>
<accession>B1LJH2</accession>
<comment type="function">
    <text evidence="1">Bidirectionally degrades single-stranded DNA into large acid-insoluble oligonucleotides, which are then degraded further into small acid-soluble oligonucleotides.</text>
</comment>
<comment type="catalytic activity">
    <reaction evidence="1">
        <text>Exonucleolytic cleavage in either 5'- to 3'- or 3'- to 5'-direction to yield nucleoside 5'-phosphates.</text>
        <dbReference type="EC" id="3.1.11.6"/>
    </reaction>
</comment>
<comment type="subunit">
    <text evidence="1">Heterooligomer composed of large and small subunits.</text>
</comment>
<comment type="subcellular location">
    <subcellularLocation>
        <location evidence="1">Cytoplasm</location>
    </subcellularLocation>
</comment>
<comment type="similarity">
    <text evidence="1">Belongs to the XseB family.</text>
</comment>
<proteinExistence type="inferred from homology"/>
<reference key="1">
    <citation type="journal article" date="2008" name="J. Bacteriol.">
        <title>Insights into the environmental resistance gene pool from the genome sequence of the multidrug-resistant environmental isolate Escherichia coli SMS-3-5.</title>
        <authorList>
            <person name="Fricke W.F."/>
            <person name="Wright M.S."/>
            <person name="Lindell A.H."/>
            <person name="Harkins D.M."/>
            <person name="Baker-Austin C."/>
            <person name="Ravel J."/>
            <person name="Stepanauskas R."/>
        </authorList>
    </citation>
    <scope>NUCLEOTIDE SEQUENCE [LARGE SCALE GENOMIC DNA]</scope>
    <source>
        <strain>SMS-3-5 / SECEC</strain>
    </source>
</reference>
<name>EX7S_ECOSM</name>
<gene>
    <name evidence="1" type="primary">xseB</name>
    <name type="ordered locus">EcSMS35_0458</name>
</gene>
<evidence type="ECO:0000255" key="1">
    <source>
        <dbReference type="HAMAP-Rule" id="MF_00337"/>
    </source>
</evidence>